<dbReference type="EC" id="1.1.1.n12" evidence="6"/>
<dbReference type="EC" id="4.2.1.119" evidence="6"/>
<dbReference type="EMBL" id="AE014298">
    <property type="protein sequence ID" value="AAF48572.1"/>
    <property type="molecule type" value="Genomic_DNA"/>
</dbReference>
<dbReference type="EMBL" id="AY051493">
    <property type="protein sequence ID" value="AAK92917.1"/>
    <property type="molecule type" value="mRNA"/>
</dbReference>
<dbReference type="RefSeq" id="NP_001285318.1">
    <property type="nucleotide sequence ID" value="NM_001298389.1"/>
</dbReference>
<dbReference type="RefSeq" id="NP_573109.1">
    <property type="nucleotide sequence ID" value="NM_132881.3"/>
</dbReference>
<dbReference type="PDB" id="3OML">
    <property type="method" value="X-ray"/>
    <property type="resolution" value="2.15 A"/>
    <property type="chains" value="A=1-598"/>
</dbReference>
<dbReference type="PDBsum" id="3OML"/>
<dbReference type="SASBDB" id="Q9VXJ0"/>
<dbReference type="SMR" id="Q9VXJ0"/>
<dbReference type="BioGRID" id="58924">
    <property type="interactions" value="15"/>
</dbReference>
<dbReference type="FunCoup" id="Q9VXJ0">
    <property type="interactions" value="930"/>
</dbReference>
<dbReference type="IntAct" id="Q9VXJ0">
    <property type="interactions" value="165"/>
</dbReference>
<dbReference type="MINT" id="Q9VXJ0"/>
<dbReference type="STRING" id="7227.FBpp0073988"/>
<dbReference type="GlyGen" id="Q9VXJ0">
    <property type="glycosylation" value="1 site"/>
</dbReference>
<dbReference type="PaxDb" id="7227-FBpp0073988"/>
<dbReference type="DNASU" id="32582"/>
<dbReference type="EnsemblMetazoa" id="FBtr0074209">
    <property type="protein sequence ID" value="FBpp0073988"/>
    <property type="gene ID" value="FBgn0030731"/>
</dbReference>
<dbReference type="EnsemblMetazoa" id="FBtr0340442">
    <property type="protein sequence ID" value="FBpp0309384"/>
    <property type="gene ID" value="FBgn0030731"/>
</dbReference>
<dbReference type="GeneID" id="32582"/>
<dbReference type="KEGG" id="dme:Dmel_CG3415"/>
<dbReference type="UCSC" id="CG3415-RA">
    <property type="organism name" value="d. melanogaster"/>
</dbReference>
<dbReference type="AGR" id="FB:FBgn0030731"/>
<dbReference type="CTD" id="32582"/>
<dbReference type="FlyBase" id="FBgn0030731">
    <property type="gene designation" value="Mfe2"/>
</dbReference>
<dbReference type="VEuPathDB" id="VectorBase:FBgn0030731"/>
<dbReference type="eggNOG" id="KOG1206">
    <property type="taxonomic scope" value="Eukaryota"/>
</dbReference>
<dbReference type="HOGENOM" id="CLU_010194_18_4_1"/>
<dbReference type="InParanoid" id="Q9VXJ0"/>
<dbReference type="OMA" id="WATKVHT"/>
<dbReference type="OrthoDB" id="3592703at2759"/>
<dbReference type="PhylomeDB" id="Q9VXJ0"/>
<dbReference type="Reactome" id="R-DME-193368">
    <property type="pathway name" value="Synthesis of bile acids and bile salts via 7alpha-hydroxycholesterol"/>
</dbReference>
<dbReference type="Reactome" id="R-DME-2046106">
    <property type="pathway name" value="alpha-linolenic acid (ALA) metabolism"/>
</dbReference>
<dbReference type="Reactome" id="R-DME-389887">
    <property type="pathway name" value="Beta-oxidation of pristanoyl-CoA"/>
</dbReference>
<dbReference type="Reactome" id="R-DME-390247">
    <property type="pathway name" value="Beta-oxidation of very long chain fatty acids"/>
</dbReference>
<dbReference type="Reactome" id="R-DME-9033241">
    <property type="pathway name" value="Peroxisomal protein import"/>
</dbReference>
<dbReference type="SignaLink" id="Q9VXJ0"/>
<dbReference type="UniPathway" id="UPA00659"/>
<dbReference type="BioGRID-ORCS" id="32582">
    <property type="hits" value="0 hits in 1 CRISPR screen"/>
</dbReference>
<dbReference type="EvolutionaryTrace" id="Q9VXJ0"/>
<dbReference type="GenomeRNAi" id="32582"/>
<dbReference type="PRO" id="PR:Q9VXJ0"/>
<dbReference type="Proteomes" id="UP000000803">
    <property type="component" value="Chromosome X"/>
</dbReference>
<dbReference type="Bgee" id="FBgn0030731">
    <property type="expression patterns" value="Expressed in crop (Drosophila) and 121 other cell types or tissues"/>
</dbReference>
<dbReference type="ExpressionAtlas" id="Q9VXJ0">
    <property type="expression patterns" value="baseline and differential"/>
</dbReference>
<dbReference type="GO" id="GO:0005777">
    <property type="term" value="C:peroxisome"/>
    <property type="evidence" value="ECO:0000250"/>
    <property type="project" value="FlyBase"/>
</dbReference>
<dbReference type="GO" id="GO:0106386">
    <property type="term" value="F:(3R)-hydroxyacyl-CoA dehydrogenase (NAD+) activity"/>
    <property type="evidence" value="ECO:0007669"/>
    <property type="project" value="RHEA"/>
</dbReference>
<dbReference type="GO" id="GO:0044594">
    <property type="term" value="F:17-beta-hydroxysteroid dehydrogenase (NAD+) activity"/>
    <property type="evidence" value="ECO:0000318"/>
    <property type="project" value="GO_Central"/>
</dbReference>
<dbReference type="GO" id="GO:0018812">
    <property type="term" value="F:3-hydroxyacyl-CoA dehydratase activity"/>
    <property type="evidence" value="ECO:0000314"/>
    <property type="project" value="FlyBase"/>
</dbReference>
<dbReference type="GO" id="GO:0003857">
    <property type="term" value="F:3-hydroxyacyl-CoA dehydrogenase activity"/>
    <property type="evidence" value="ECO:0000250"/>
    <property type="project" value="FlyBase"/>
</dbReference>
<dbReference type="GO" id="GO:0004300">
    <property type="term" value="F:enoyl-CoA hydratase activity"/>
    <property type="evidence" value="ECO:0000314"/>
    <property type="project" value="FlyBase"/>
</dbReference>
<dbReference type="GO" id="GO:0004303">
    <property type="term" value="F:estradiol 17-beta-dehydrogenase [NAD(P)+] activity"/>
    <property type="evidence" value="ECO:0000250"/>
    <property type="project" value="FlyBase"/>
</dbReference>
<dbReference type="GO" id="GO:0042803">
    <property type="term" value="F:protein homodimerization activity"/>
    <property type="evidence" value="ECO:0000314"/>
    <property type="project" value="FlyBase"/>
</dbReference>
<dbReference type="GO" id="GO:0006635">
    <property type="term" value="P:fatty acid beta-oxidation"/>
    <property type="evidence" value="ECO:0000318"/>
    <property type="project" value="GO_Central"/>
</dbReference>
<dbReference type="GO" id="GO:0033540">
    <property type="term" value="P:fatty acid beta-oxidation using acyl-CoA oxidase"/>
    <property type="evidence" value="ECO:0000305"/>
    <property type="project" value="FlyBase"/>
</dbReference>
<dbReference type="CDD" id="cd03448">
    <property type="entry name" value="HDE_HSD"/>
    <property type="match status" value="1"/>
</dbReference>
<dbReference type="CDD" id="cd05353">
    <property type="entry name" value="hydroxyacyl-CoA-like_DH_SDR_c-like"/>
    <property type="match status" value="1"/>
</dbReference>
<dbReference type="DisProt" id="DP02662"/>
<dbReference type="FunFam" id="3.40.50.720:FF:000185">
    <property type="entry name" value="peroxisomal multifunctional enzyme type 2"/>
    <property type="match status" value="1"/>
</dbReference>
<dbReference type="FunFam" id="3.10.129.10:FF:000061">
    <property type="entry name" value="Probable dehydrogenase"/>
    <property type="match status" value="1"/>
</dbReference>
<dbReference type="Gene3D" id="1.10.287.4290">
    <property type="match status" value="1"/>
</dbReference>
<dbReference type="Gene3D" id="3.10.129.10">
    <property type="entry name" value="Hotdog Thioesterase"/>
    <property type="match status" value="1"/>
</dbReference>
<dbReference type="Gene3D" id="3.40.50.720">
    <property type="entry name" value="NAD(P)-binding Rossmann-like Domain"/>
    <property type="match status" value="1"/>
</dbReference>
<dbReference type="InterPro" id="IPR029069">
    <property type="entry name" value="HotDog_dom_sf"/>
</dbReference>
<dbReference type="InterPro" id="IPR002539">
    <property type="entry name" value="MaoC-like_dom"/>
</dbReference>
<dbReference type="InterPro" id="IPR054357">
    <property type="entry name" value="MFE-2_N"/>
</dbReference>
<dbReference type="InterPro" id="IPR036291">
    <property type="entry name" value="NAD(P)-bd_dom_sf"/>
</dbReference>
<dbReference type="InterPro" id="IPR051687">
    <property type="entry name" value="Peroxisomal_Beta-Oxidation"/>
</dbReference>
<dbReference type="InterPro" id="IPR020904">
    <property type="entry name" value="Sc_DH/Rdtase_CS"/>
</dbReference>
<dbReference type="InterPro" id="IPR002347">
    <property type="entry name" value="SDR_fam"/>
</dbReference>
<dbReference type="PANTHER" id="PTHR45024">
    <property type="entry name" value="DEHYDROGENASES, SHORT CHAIN"/>
    <property type="match status" value="1"/>
</dbReference>
<dbReference type="PANTHER" id="PTHR45024:SF2">
    <property type="entry name" value="SCP2 DOMAIN-CONTAINING PROTEIN"/>
    <property type="match status" value="1"/>
</dbReference>
<dbReference type="Pfam" id="PF00106">
    <property type="entry name" value="adh_short"/>
    <property type="match status" value="1"/>
</dbReference>
<dbReference type="Pfam" id="PF01575">
    <property type="entry name" value="MaoC_dehydratas"/>
    <property type="match status" value="1"/>
</dbReference>
<dbReference type="Pfam" id="PF22622">
    <property type="entry name" value="MFE-2_hydrat-2_N"/>
    <property type="match status" value="1"/>
</dbReference>
<dbReference type="PRINTS" id="PR00081">
    <property type="entry name" value="GDHRDH"/>
</dbReference>
<dbReference type="PRINTS" id="PR00080">
    <property type="entry name" value="SDRFAMILY"/>
</dbReference>
<dbReference type="SMART" id="SM00822">
    <property type="entry name" value="PKS_KR"/>
    <property type="match status" value="1"/>
</dbReference>
<dbReference type="SUPFAM" id="SSF51735">
    <property type="entry name" value="NAD(P)-binding Rossmann-fold domains"/>
    <property type="match status" value="1"/>
</dbReference>
<dbReference type="SUPFAM" id="SSF54637">
    <property type="entry name" value="Thioesterase/thiol ester dehydrase-isomerase"/>
    <property type="match status" value="2"/>
</dbReference>
<dbReference type="PROSITE" id="PS00061">
    <property type="entry name" value="ADH_SHORT"/>
    <property type="match status" value="1"/>
</dbReference>
<name>DHB4_DROME</name>
<comment type="function">
    <text evidence="6">Bifunctional enzyme acting on the peroxisomal beta-oxidation pathway for fatty acids.</text>
</comment>
<comment type="catalytic activity">
    <reaction evidence="6">
        <text>a (3R)-3-hydroxyacyl-CoA + NAD(+) = a 3-oxoacyl-CoA + NADH + H(+)</text>
        <dbReference type="Rhea" id="RHEA:32711"/>
        <dbReference type="ChEBI" id="CHEBI:15378"/>
        <dbReference type="ChEBI" id="CHEBI:57319"/>
        <dbReference type="ChEBI" id="CHEBI:57540"/>
        <dbReference type="ChEBI" id="CHEBI:57945"/>
        <dbReference type="ChEBI" id="CHEBI:90726"/>
        <dbReference type="EC" id="1.1.1.n12"/>
    </reaction>
</comment>
<comment type="catalytic activity">
    <reaction evidence="6">
        <text>a (3R)-3-hydroxyacyl-CoA = a (2E)-enoyl-CoA + H2O</text>
        <dbReference type="Rhea" id="RHEA:26526"/>
        <dbReference type="ChEBI" id="CHEBI:15377"/>
        <dbReference type="ChEBI" id="CHEBI:57319"/>
        <dbReference type="ChEBI" id="CHEBI:58856"/>
        <dbReference type="EC" id="4.2.1.119"/>
    </reaction>
</comment>
<comment type="biophysicochemical properties">
    <kinetics>
        <KM evidence="6">85.3 uM for (2E)-butenoyl-CoA (at 22 degrees Celsius)</KM>
        <KM evidence="6">66.7 uM for (2E)-hexenoyl-CoA (at 22 degrees Celsius)</KM>
        <KM evidence="6">31.4 uM for (2E)-decenoyl-CoA (at 22 degrees Celsius)</KM>
        <Vmax evidence="6">1.07 umol/min/mg enzyme with (2E)-butenoyl-CoA (at 22 degrees Celsius)</Vmax>
        <Vmax evidence="6">15.0 umol/min/mg enzyme with (2E)-hexenoyl-CoA (at 22 degrees Celsius)</Vmax>
        <Vmax evidence="6">31.4 umol/min/mg enzyme with (2E)-decenoyl-CoA (at 22 degrees Celsius)</Vmax>
        <text evidence="6">Catalytic efficiency is similar using full-length protein or the individual (3R)-hydroxyacyl-CoA dehydrogenase and enoyl-CoA hydratase 2 domains in a 1:1 mixture.</text>
    </kinetics>
</comment>
<comment type="pathway">
    <text evidence="2">Lipid metabolism; fatty acid beta-oxidation.</text>
</comment>
<comment type="subunit">
    <text evidence="6">Homodimer.</text>
</comment>
<comment type="subcellular location">
    <subcellularLocation>
        <location evidence="2">Peroxisome</location>
    </subcellularLocation>
</comment>
<comment type="miscellaneous">
    <text>Complements functionally the S.cerevisiae peroxisomal MFE-2 in vivo.</text>
</comment>
<comment type="similarity">
    <text evidence="3">Belongs to the short-chain dehydrogenases/reductases (SDR) family.</text>
</comment>
<reference evidence="9" key="1">
    <citation type="journal article" date="2000" name="Science">
        <title>The genome sequence of Drosophila melanogaster.</title>
        <authorList>
            <person name="Adams M.D."/>
            <person name="Celniker S.E."/>
            <person name="Holt R.A."/>
            <person name="Evans C.A."/>
            <person name="Gocayne J.D."/>
            <person name="Amanatides P.G."/>
            <person name="Scherer S.E."/>
            <person name="Li P.W."/>
            <person name="Hoskins R.A."/>
            <person name="Galle R.F."/>
            <person name="George R.A."/>
            <person name="Lewis S.E."/>
            <person name="Richards S."/>
            <person name="Ashburner M."/>
            <person name="Henderson S.N."/>
            <person name="Sutton G.G."/>
            <person name="Wortman J.R."/>
            <person name="Yandell M.D."/>
            <person name="Zhang Q."/>
            <person name="Chen L.X."/>
            <person name="Brandon R.C."/>
            <person name="Rogers Y.-H.C."/>
            <person name="Blazej R.G."/>
            <person name="Champe M."/>
            <person name="Pfeiffer B.D."/>
            <person name="Wan K.H."/>
            <person name="Doyle C."/>
            <person name="Baxter E.G."/>
            <person name="Helt G."/>
            <person name="Nelson C.R."/>
            <person name="Miklos G.L.G."/>
            <person name="Abril J.F."/>
            <person name="Agbayani A."/>
            <person name="An H.-J."/>
            <person name="Andrews-Pfannkoch C."/>
            <person name="Baldwin D."/>
            <person name="Ballew R.M."/>
            <person name="Basu A."/>
            <person name="Baxendale J."/>
            <person name="Bayraktaroglu L."/>
            <person name="Beasley E.M."/>
            <person name="Beeson K.Y."/>
            <person name="Benos P.V."/>
            <person name="Berman B.P."/>
            <person name="Bhandari D."/>
            <person name="Bolshakov S."/>
            <person name="Borkova D."/>
            <person name="Botchan M.R."/>
            <person name="Bouck J."/>
            <person name="Brokstein P."/>
            <person name="Brottier P."/>
            <person name="Burtis K.C."/>
            <person name="Busam D.A."/>
            <person name="Butler H."/>
            <person name="Cadieu E."/>
            <person name="Center A."/>
            <person name="Chandra I."/>
            <person name="Cherry J.M."/>
            <person name="Cawley S."/>
            <person name="Dahlke C."/>
            <person name="Davenport L.B."/>
            <person name="Davies P."/>
            <person name="de Pablos B."/>
            <person name="Delcher A."/>
            <person name="Deng Z."/>
            <person name="Mays A.D."/>
            <person name="Dew I."/>
            <person name="Dietz S.M."/>
            <person name="Dodson K."/>
            <person name="Doup L.E."/>
            <person name="Downes M."/>
            <person name="Dugan-Rocha S."/>
            <person name="Dunkov B.C."/>
            <person name="Dunn P."/>
            <person name="Durbin K.J."/>
            <person name="Evangelista C.C."/>
            <person name="Ferraz C."/>
            <person name="Ferriera S."/>
            <person name="Fleischmann W."/>
            <person name="Fosler C."/>
            <person name="Gabrielian A.E."/>
            <person name="Garg N.S."/>
            <person name="Gelbart W.M."/>
            <person name="Glasser K."/>
            <person name="Glodek A."/>
            <person name="Gong F."/>
            <person name="Gorrell J.H."/>
            <person name="Gu Z."/>
            <person name="Guan P."/>
            <person name="Harris M."/>
            <person name="Harris N.L."/>
            <person name="Harvey D.A."/>
            <person name="Heiman T.J."/>
            <person name="Hernandez J.R."/>
            <person name="Houck J."/>
            <person name="Hostin D."/>
            <person name="Houston K.A."/>
            <person name="Howland T.J."/>
            <person name="Wei M.-H."/>
            <person name="Ibegwam C."/>
            <person name="Jalali M."/>
            <person name="Kalush F."/>
            <person name="Karpen G.H."/>
            <person name="Ke Z."/>
            <person name="Kennison J.A."/>
            <person name="Ketchum K.A."/>
            <person name="Kimmel B.E."/>
            <person name="Kodira C.D."/>
            <person name="Kraft C.L."/>
            <person name="Kravitz S."/>
            <person name="Kulp D."/>
            <person name="Lai Z."/>
            <person name="Lasko P."/>
            <person name="Lei Y."/>
            <person name="Levitsky A.A."/>
            <person name="Li J.H."/>
            <person name="Li Z."/>
            <person name="Liang Y."/>
            <person name="Lin X."/>
            <person name="Liu X."/>
            <person name="Mattei B."/>
            <person name="McIntosh T.C."/>
            <person name="McLeod M.P."/>
            <person name="McPherson D."/>
            <person name="Merkulov G."/>
            <person name="Milshina N.V."/>
            <person name="Mobarry C."/>
            <person name="Morris J."/>
            <person name="Moshrefi A."/>
            <person name="Mount S.M."/>
            <person name="Moy M."/>
            <person name="Murphy B."/>
            <person name="Murphy L."/>
            <person name="Muzny D.M."/>
            <person name="Nelson D.L."/>
            <person name="Nelson D.R."/>
            <person name="Nelson K.A."/>
            <person name="Nixon K."/>
            <person name="Nusskern D.R."/>
            <person name="Pacleb J.M."/>
            <person name="Palazzolo M."/>
            <person name="Pittman G.S."/>
            <person name="Pan S."/>
            <person name="Pollard J."/>
            <person name="Puri V."/>
            <person name="Reese M.G."/>
            <person name="Reinert K."/>
            <person name="Remington K."/>
            <person name="Saunders R.D.C."/>
            <person name="Scheeler F."/>
            <person name="Shen H."/>
            <person name="Shue B.C."/>
            <person name="Siden-Kiamos I."/>
            <person name="Simpson M."/>
            <person name="Skupski M.P."/>
            <person name="Smith T.J."/>
            <person name="Spier E."/>
            <person name="Spradling A.C."/>
            <person name="Stapleton M."/>
            <person name="Strong R."/>
            <person name="Sun E."/>
            <person name="Svirskas R."/>
            <person name="Tector C."/>
            <person name="Turner R."/>
            <person name="Venter E."/>
            <person name="Wang A.H."/>
            <person name="Wang X."/>
            <person name="Wang Z.-Y."/>
            <person name="Wassarman D.A."/>
            <person name="Weinstock G.M."/>
            <person name="Weissenbach J."/>
            <person name="Williams S.M."/>
            <person name="Woodage T."/>
            <person name="Worley K.C."/>
            <person name="Wu D."/>
            <person name="Yang S."/>
            <person name="Yao Q.A."/>
            <person name="Ye J."/>
            <person name="Yeh R.-F."/>
            <person name="Zaveri J.S."/>
            <person name="Zhan M."/>
            <person name="Zhang G."/>
            <person name="Zhao Q."/>
            <person name="Zheng L."/>
            <person name="Zheng X.H."/>
            <person name="Zhong F.N."/>
            <person name="Zhong W."/>
            <person name="Zhou X."/>
            <person name="Zhu S.C."/>
            <person name="Zhu X."/>
            <person name="Smith H.O."/>
            <person name="Gibbs R.A."/>
            <person name="Myers E.W."/>
            <person name="Rubin G.M."/>
            <person name="Venter J.C."/>
        </authorList>
    </citation>
    <scope>NUCLEOTIDE SEQUENCE [LARGE SCALE GENOMIC DNA]</scope>
    <source>
        <strain>Berkeley</strain>
    </source>
</reference>
<reference evidence="8 9" key="2">
    <citation type="journal article" date="2002" name="Genome Biol.">
        <title>Annotation of the Drosophila melanogaster euchromatic genome: a systematic review.</title>
        <authorList>
            <person name="Misra S."/>
            <person name="Crosby M.A."/>
            <person name="Mungall C.J."/>
            <person name="Matthews B.B."/>
            <person name="Campbell K.S."/>
            <person name="Hradecky P."/>
            <person name="Huang Y."/>
            <person name="Kaminker J.S."/>
            <person name="Millburn G.H."/>
            <person name="Prochnik S.E."/>
            <person name="Smith C.D."/>
            <person name="Tupy J.L."/>
            <person name="Whitfield E.J."/>
            <person name="Bayraktaroglu L."/>
            <person name="Berman B.P."/>
            <person name="Bettencourt B.R."/>
            <person name="Celniker S.E."/>
            <person name="de Grey A.D.N.J."/>
            <person name="Drysdale R.A."/>
            <person name="Harris N.L."/>
            <person name="Richter J."/>
            <person name="Russo S."/>
            <person name="Schroeder A.J."/>
            <person name="Shu S.Q."/>
            <person name="Stapleton M."/>
            <person name="Yamada C."/>
            <person name="Ashburner M."/>
            <person name="Gelbart W.M."/>
            <person name="Rubin G.M."/>
            <person name="Lewis S.E."/>
        </authorList>
    </citation>
    <scope>GENOME REANNOTATION</scope>
    <source>
        <strain>Berkeley</strain>
    </source>
</reference>
<reference evidence="10" key="3">
    <citation type="journal article" date="2002" name="Genome Biol.">
        <title>A Drosophila full-length cDNA resource.</title>
        <authorList>
            <person name="Stapleton M."/>
            <person name="Carlson J.W."/>
            <person name="Brokstein P."/>
            <person name="Yu C."/>
            <person name="Champe M."/>
            <person name="George R.A."/>
            <person name="Guarin H."/>
            <person name="Kronmiller B."/>
            <person name="Pacleb J.M."/>
            <person name="Park S."/>
            <person name="Wan K.H."/>
            <person name="Rubin G.M."/>
            <person name="Celniker S.E."/>
        </authorList>
    </citation>
    <scope>NUCLEOTIDE SEQUENCE [LARGE SCALE MRNA]</scope>
    <source>
        <strain evidence="5">Berkeley</strain>
        <tissue evidence="5">Head</tissue>
    </source>
</reference>
<reference evidence="8 12" key="4">
    <citation type="journal article" date="2011" name="Biochem. J.">
        <title>Peroxisomal multifunctional enzyme type 2 from the fruitfly: dehydrogenase and hydratase act as separate entities, as revealed by structure and kinetics.</title>
        <authorList>
            <person name="Haataja T.J."/>
            <person name="Koski M.K."/>
            <person name="Hiltunen J.K."/>
            <person name="Glumoff T."/>
        </authorList>
    </citation>
    <scope>X-RAY CRYSTALLOGRAPHY (2.15 ANGSTROMS) IN COMPLEX WITH NAD</scope>
    <scope>FUNCTION</scope>
    <scope>CATALYTIC ACTIVITY</scope>
    <scope>BIOPHYSICOCHEMICAL PROPERTIES</scope>
    <scope>SUBUNIT</scope>
</reference>
<proteinExistence type="evidence at protein level"/>
<feature type="chain" id="PRO_0000416935" description="Peroxisomal multifunctional enzyme type 2">
    <location>
        <begin position="1"/>
        <end position="598"/>
    </location>
</feature>
<feature type="domain" description="MaoC-like" evidence="3">
    <location>
        <begin position="469"/>
        <end position="586"/>
    </location>
</feature>
<feature type="region of interest" description="(3R)-hydroxyacyl-CoA dehydrogenase" evidence="6">
    <location>
        <begin position="1"/>
        <end position="309"/>
    </location>
</feature>
<feature type="region of interest" description="Enoyl-CoA hydratase 2" evidence="6">
    <location>
        <begin position="310"/>
        <end position="598"/>
    </location>
</feature>
<feature type="short sequence motif" description="Microbody targeting signal" evidence="3">
    <location>
        <begin position="596"/>
        <end position="598"/>
    </location>
</feature>
<feature type="active site" description="Proton acceptor" evidence="2 4">
    <location>
        <position position="167"/>
    </location>
</feature>
<feature type="binding site" evidence="2">
    <location>
        <begin position="16"/>
        <end position="40"/>
    </location>
    <ligand>
        <name>NAD(+)</name>
        <dbReference type="ChEBI" id="CHEBI:57540"/>
    </ligand>
</feature>
<feature type="binding site" evidence="2">
    <location>
        <position position="24"/>
    </location>
    <ligand>
        <name>NAD(+)</name>
        <dbReference type="ChEBI" id="CHEBI:57540"/>
    </ligand>
</feature>
<feature type="binding site" evidence="2">
    <location>
        <position position="43"/>
    </location>
    <ligand>
        <name>NAD(+)</name>
        <dbReference type="ChEBI" id="CHEBI:57540"/>
    </ligand>
</feature>
<feature type="binding site" evidence="2">
    <location>
        <begin position="78"/>
        <end position="79"/>
    </location>
    <ligand>
        <name>NAD(+)</name>
        <dbReference type="ChEBI" id="CHEBI:57540"/>
    </ligand>
</feature>
<feature type="binding site" evidence="2">
    <location>
        <position position="102"/>
    </location>
    <ligand>
        <name>NAD(+)</name>
        <dbReference type="ChEBI" id="CHEBI:57540"/>
    </ligand>
</feature>
<feature type="binding site" evidence="2">
    <location>
        <position position="154"/>
    </location>
    <ligand>
        <name>substrate</name>
    </ligand>
</feature>
<feature type="binding site" evidence="2">
    <location>
        <begin position="167"/>
        <end position="171"/>
    </location>
    <ligand>
        <name>NAD(+)</name>
        <dbReference type="ChEBI" id="CHEBI:57540"/>
    </ligand>
</feature>
<feature type="binding site" evidence="2">
    <location>
        <begin position="199"/>
        <end position="202"/>
    </location>
    <ligand>
        <name>NAD(+)</name>
        <dbReference type="ChEBI" id="CHEBI:57540"/>
    </ligand>
</feature>
<feature type="binding site" evidence="1">
    <location>
        <begin position="390"/>
        <end position="391"/>
    </location>
    <ligand>
        <name>(3R)-3-hydroxydecanoyl-CoA</name>
        <dbReference type="ChEBI" id="CHEBI:74272"/>
    </ligand>
</feature>
<feature type="binding site" evidence="1">
    <location>
        <position position="419"/>
    </location>
    <ligand>
        <name>(3R)-3-hydroxydecanoyl-CoA</name>
        <dbReference type="ChEBI" id="CHEBI:74272"/>
    </ligand>
</feature>
<feature type="binding site" evidence="1">
    <location>
        <begin position="496"/>
        <end position="501"/>
    </location>
    <ligand>
        <name>(3R)-3-hydroxydecanoyl-CoA</name>
        <dbReference type="ChEBI" id="CHEBI:74272"/>
    </ligand>
</feature>
<feature type="binding site" evidence="1">
    <location>
        <position position="519"/>
    </location>
    <ligand>
        <name>(3R)-3-hydroxydecanoyl-CoA</name>
        <dbReference type="ChEBI" id="CHEBI:74272"/>
    </ligand>
</feature>
<feature type="binding site" evidence="1">
    <location>
        <position position="549"/>
    </location>
    <ligand>
        <name>(3R)-3-hydroxydecanoyl-CoA</name>
        <dbReference type="ChEBI" id="CHEBI:74272"/>
    </ligand>
</feature>
<feature type="strand" evidence="13">
    <location>
        <begin position="14"/>
        <end position="17"/>
    </location>
</feature>
<feature type="turn" evidence="13">
    <location>
        <begin position="18"/>
        <end position="21"/>
    </location>
</feature>
<feature type="helix" evidence="13">
    <location>
        <begin position="23"/>
        <end position="34"/>
    </location>
</feature>
<feature type="strand" evidence="13">
    <location>
        <begin position="38"/>
        <end position="41"/>
    </location>
</feature>
<feature type="helix" evidence="13">
    <location>
        <begin position="58"/>
        <end position="67"/>
    </location>
</feature>
<feature type="strand" evidence="13">
    <location>
        <begin position="72"/>
        <end position="74"/>
    </location>
</feature>
<feature type="helix" evidence="13">
    <location>
        <begin position="79"/>
        <end position="81"/>
    </location>
</feature>
<feature type="helix" evidence="13">
    <location>
        <begin position="82"/>
        <end position="86"/>
    </location>
</feature>
<feature type="helix" evidence="13">
    <location>
        <begin position="116"/>
        <end position="142"/>
    </location>
</feature>
<feature type="turn" evidence="13">
    <location>
        <begin position="143"/>
        <end position="145"/>
    </location>
</feature>
<feature type="strand" evidence="13">
    <location>
        <begin position="147"/>
        <end position="152"/>
    </location>
</feature>
<feature type="helix" evidence="13">
    <location>
        <begin position="155"/>
        <end position="159"/>
    </location>
</feature>
<feature type="helix" evidence="13">
    <location>
        <begin position="165"/>
        <end position="185"/>
    </location>
</feature>
<feature type="helix" evidence="13">
    <location>
        <begin position="186"/>
        <end position="188"/>
    </location>
</feature>
<feature type="strand" evidence="13">
    <location>
        <begin position="190"/>
        <end position="197"/>
    </location>
</feature>
<feature type="helix" evidence="13">
    <location>
        <begin position="210"/>
        <end position="213"/>
    </location>
</feature>
<feature type="helix" evidence="13">
    <location>
        <begin position="218"/>
        <end position="220"/>
    </location>
</feature>
<feature type="helix" evidence="13">
    <location>
        <begin position="222"/>
        <end position="227"/>
    </location>
</feature>
<feature type="strand" evidence="13">
    <location>
        <begin position="239"/>
        <end position="243"/>
    </location>
</feature>
<feature type="strand" evidence="13">
    <location>
        <begin position="246"/>
        <end position="250"/>
    </location>
</feature>
<feature type="strand" evidence="13">
    <location>
        <begin position="260"/>
        <end position="263"/>
    </location>
</feature>
<feature type="helix" evidence="13">
    <location>
        <begin position="270"/>
        <end position="275"/>
    </location>
</feature>
<feature type="helix" evidence="13">
    <location>
        <begin position="277"/>
        <end position="280"/>
    </location>
</feature>
<feature type="helix" evidence="13">
    <location>
        <begin position="292"/>
        <end position="307"/>
    </location>
</feature>
<feature type="strand" evidence="13">
    <location>
        <begin position="314"/>
        <end position="320"/>
    </location>
</feature>
<feature type="helix" evidence="13">
    <location>
        <begin position="322"/>
        <end position="331"/>
    </location>
</feature>
<feature type="helix" evidence="13">
    <location>
        <begin position="339"/>
        <end position="341"/>
    </location>
</feature>
<feature type="helix" evidence="13">
    <location>
        <begin position="342"/>
        <end position="345"/>
    </location>
</feature>
<feature type="helix" evidence="13">
    <location>
        <begin position="356"/>
        <end position="360"/>
    </location>
</feature>
<feature type="helix" evidence="13">
    <location>
        <begin position="361"/>
        <end position="369"/>
    </location>
</feature>
<feature type="strand" evidence="13">
    <location>
        <begin position="389"/>
        <end position="397"/>
    </location>
</feature>
<feature type="strand" evidence="13">
    <location>
        <begin position="403"/>
        <end position="418"/>
    </location>
</feature>
<feature type="strand" evidence="13">
    <location>
        <begin position="423"/>
        <end position="432"/>
    </location>
</feature>
<feature type="strand" evidence="13">
    <location>
        <begin position="438"/>
        <end position="448"/>
    </location>
</feature>
<feature type="strand" evidence="13">
    <location>
        <begin position="476"/>
        <end position="482"/>
    </location>
</feature>
<feature type="helix" evidence="13">
    <location>
        <begin position="487"/>
        <end position="491"/>
    </location>
</feature>
<feature type="helix" evidence="13">
    <location>
        <begin position="492"/>
        <end position="494"/>
    </location>
</feature>
<feature type="helix" evidence="13">
    <location>
        <begin position="499"/>
        <end position="501"/>
    </location>
</feature>
<feature type="helix" evidence="13">
    <location>
        <begin position="504"/>
        <end position="509"/>
    </location>
</feature>
<feature type="helix" evidence="13">
    <location>
        <begin position="519"/>
        <end position="534"/>
    </location>
</feature>
<feature type="helix" evidence="13">
    <location>
        <begin position="539"/>
        <end position="541"/>
    </location>
</feature>
<feature type="strand" evidence="13">
    <location>
        <begin position="542"/>
        <end position="549"/>
    </location>
</feature>
<feature type="strand" evidence="13">
    <location>
        <begin position="558"/>
        <end position="566"/>
    </location>
</feature>
<feature type="strand" evidence="13">
    <location>
        <begin position="569"/>
        <end position="576"/>
    </location>
</feature>
<feature type="turn" evidence="13">
    <location>
        <begin position="577"/>
        <end position="579"/>
    </location>
</feature>
<feature type="strand" evidence="13">
    <location>
        <begin position="582"/>
        <end position="591"/>
    </location>
</feature>
<gene>
    <name evidence="11" type="primary">Mfe2</name>
    <name type="ORF">CG3415</name>
</gene>
<keyword id="KW-0002">3D-structure</keyword>
<keyword id="KW-0276">Fatty acid metabolism</keyword>
<keyword id="KW-0443">Lipid metabolism</keyword>
<keyword id="KW-0456">Lyase</keyword>
<keyword id="KW-0511">Multifunctional enzyme</keyword>
<keyword id="KW-0520">NAD</keyword>
<keyword id="KW-0560">Oxidoreductase</keyword>
<keyword id="KW-0576">Peroxisome</keyword>
<keyword id="KW-1185">Reference proteome</keyword>
<evidence type="ECO:0000250" key="1">
    <source>
        <dbReference type="UniProtKB" id="P22414"/>
    </source>
</evidence>
<evidence type="ECO:0000250" key="2">
    <source>
        <dbReference type="UniProtKB" id="P51659"/>
    </source>
</evidence>
<evidence type="ECO:0000255" key="3"/>
<evidence type="ECO:0000255" key="4">
    <source>
        <dbReference type="PROSITE-ProRule" id="PRU10001"/>
    </source>
</evidence>
<evidence type="ECO:0000269" key="5">
    <source>
    </source>
</evidence>
<evidence type="ECO:0000269" key="6">
    <source>
    </source>
</evidence>
<evidence type="ECO:0000303" key="7">
    <source>
    </source>
</evidence>
<evidence type="ECO:0000305" key="8"/>
<evidence type="ECO:0000312" key="9">
    <source>
        <dbReference type="EMBL" id="AAF48572.1"/>
    </source>
</evidence>
<evidence type="ECO:0000312" key="10">
    <source>
        <dbReference type="EMBL" id="AAK92917.1"/>
    </source>
</evidence>
<evidence type="ECO:0000312" key="11">
    <source>
        <dbReference type="FlyBase" id="FBgn0030731"/>
    </source>
</evidence>
<evidence type="ECO:0000312" key="12">
    <source>
        <dbReference type="PDB" id="3OML"/>
    </source>
</evidence>
<evidence type="ECO:0007829" key="13">
    <source>
        <dbReference type="PDB" id="3OML"/>
    </source>
</evidence>
<accession>Q9VXJ0</accession>
<sequence>MSSSDGKLRYDGRVAVVTGAGAGLGREYALLFAERGAKVVVNDLGGTHSGDGASQRAADIVVDEIRKAGGEAVADYNSVIDGAKVIETAIKAFGRVDILVNNAGILRDRSLVKTSEQDWNLVNDVHLKGSFKCTQAAFPYMKKQNYGRIIMTSSNSGIYGNFGQVNYTAAKMGLIGLANTVAIEGARNNVLCNVIVPTAASRMTEGILPDILFNELKPKLIAPVVAYLCHESCEDNGSYIESAAGWATKLHMVRGKGAVLRPSLDDPVTIEYVKDVWSNVTDMSKAKHLGAIAEASGTLLEVLEKLKEGGGDAIEDAFEFNSKELITYALGIGASVKNAKDMRFLYENDADFAAIPTFFVLPGLLLQMSTDKLLSKALPNSQVDFSNILHGEQYLEIVDDLPTSGTLLTNGKVFDVMDKGSGAVVVTNSESFDESGRLLVRNQSTTFIVGAGKFGGKKDPIAGVVPLQPAPNRQPDATVQYTTSEDQAALYRLSGDKNPLHIDPQMALLAGFKTPILHGLCTLGFSVRAVLAQFADNNPALFKAVKVRFSGPVIPGQTLRVDLWKQGTRINFRTVVVETGKEVISGAYVDLKSSQAKL</sequence>
<organism>
    <name type="scientific">Drosophila melanogaster</name>
    <name type="common">Fruit fly</name>
    <dbReference type="NCBI Taxonomy" id="7227"/>
    <lineage>
        <taxon>Eukaryota</taxon>
        <taxon>Metazoa</taxon>
        <taxon>Ecdysozoa</taxon>
        <taxon>Arthropoda</taxon>
        <taxon>Hexapoda</taxon>
        <taxon>Insecta</taxon>
        <taxon>Pterygota</taxon>
        <taxon>Neoptera</taxon>
        <taxon>Endopterygota</taxon>
        <taxon>Diptera</taxon>
        <taxon>Brachycera</taxon>
        <taxon>Muscomorpha</taxon>
        <taxon>Ephydroidea</taxon>
        <taxon>Drosophilidae</taxon>
        <taxon>Drosophila</taxon>
        <taxon>Sophophora</taxon>
    </lineage>
</organism>
<protein>
    <recommendedName>
        <fullName evidence="7">Peroxisomal multifunctional enzyme type 2</fullName>
        <shortName evidence="7">DmMFE-2</shortName>
    </recommendedName>
    <domain>
        <recommendedName>
            <fullName evidence="7">(3R)-hydroxyacyl-CoA dehydrogenase</fullName>
            <ecNumber evidence="6">1.1.1.n12</ecNumber>
        </recommendedName>
    </domain>
    <domain>
        <recommendedName>
            <fullName evidence="7">Enoyl-CoA hydratase 2</fullName>
            <ecNumber evidence="6">4.2.1.119</ecNumber>
        </recommendedName>
    </domain>
</protein>